<proteinExistence type="inferred from homology"/>
<organism>
    <name type="scientific">Nitrosomonas europaea (strain ATCC 19718 / CIP 103999 / KCTC 2705 / NBRC 14298)</name>
    <dbReference type="NCBI Taxonomy" id="228410"/>
    <lineage>
        <taxon>Bacteria</taxon>
        <taxon>Pseudomonadati</taxon>
        <taxon>Pseudomonadota</taxon>
        <taxon>Betaproteobacteria</taxon>
        <taxon>Nitrosomonadales</taxon>
        <taxon>Nitrosomonadaceae</taxon>
        <taxon>Nitrosomonas</taxon>
    </lineage>
</organism>
<gene>
    <name evidence="1" type="primary">pheS</name>
    <name type="ordered locus">NE0954</name>
</gene>
<protein>
    <recommendedName>
        <fullName evidence="1">Phenylalanine--tRNA ligase alpha subunit</fullName>
        <ecNumber evidence="1">6.1.1.20</ecNumber>
    </recommendedName>
    <alternativeName>
        <fullName evidence="1">Phenylalanyl-tRNA synthetase alpha subunit</fullName>
        <shortName evidence="1">PheRS</shortName>
    </alternativeName>
</protein>
<dbReference type="EC" id="6.1.1.20" evidence="1"/>
<dbReference type="EMBL" id="AL954747">
    <property type="protein sequence ID" value="CAD84865.1"/>
    <property type="molecule type" value="Genomic_DNA"/>
</dbReference>
<dbReference type="SMR" id="Q82VV5"/>
<dbReference type="STRING" id="228410.NE0954"/>
<dbReference type="KEGG" id="neu:NE0954"/>
<dbReference type="eggNOG" id="COG0016">
    <property type="taxonomic scope" value="Bacteria"/>
</dbReference>
<dbReference type="HOGENOM" id="CLU_025086_0_1_4"/>
<dbReference type="PhylomeDB" id="Q82VV5"/>
<dbReference type="Proteomes" id="UP000001416">
    <property type="component" value="Chromosome"/>
</dbReference>
<dbReference type="GO" id="GO:0005737">
    <property type="term" value="C:cytoplasm"/>
    <property type="evidence" value="ECO:0007669"/>
    <property type="project" value="UniProtKB-SubCell"/>
</dbReference>
<dbReference type="GO" id="GO:0005524">
    <property type="term" value="F:ATP binding"/>
    <property type="evidence" value="ECO:0007669"/>
    <property type="project" value="UniProtKB-UniRule"/>
</dbReference>
<dbReference type="GO" id="GO:0000287">
    <property type="term" value="F:magnesium ion binding"/>
    <property type="evidence" value="ECO:0007669"/>
    <property type="project" value="UniProtKB-UniRule"/>
</dbReference>
<dbReference type="GO" id="GO:0004826">
    <property type="term" value="F:phenylalanine-tRNA ligase activity"/>
    <property type="evidence" value="ECO:0007669"/>
    <property type="project" value="UniProtKB-UniRule"/>
</dbReference>
<dbReference type="GO" id="GO:0000049">
    <property type="term" value="F:tRNA binding"/>
    <property type="evidence" value="ECO:0007669"/>
    <property type="project" value="InterPro"/>
</dbReference>
<dbReference type="GO" id="GO:0006432">
    <property type="term" value="P:phenylalanyl-tRNA aminoacylation"/>
    <property type="evidence" value="ECO:0007669"/>
    <property type="project" value="UniProtKB-UniRule"/>
</dbReference>
<dbReference type="CDD" id="cd00496">
    <property type="entry name" value="PheRS_alpha_core"/>
    <property type="match status" value="1"/>
</dbReference>
<dbReference type="FunFam" id="3.30.930.10:FF:000003">
    <property type="entry name" value="Phenylalanine--tRNA ligase alpha subunit"/>
    <property type="match status" value="1"/>
</dbReference>
<dbReference type="Gene3D" id="3.30.930.10">
    <property type="entry name" value="Bira Bifunctional Protein, Domain 2"/>
    <property type="match status" value="1"/>
</dbReference>
<dbReference type="HAMAP" id="MF_00281">
    <property type="entry name" value="Phe_tRNA_synth_alpha1"/>
    <property type="match status" value="1"/>
</dbReference>
<dbReference type="InterPro" id="IPR006195">
    <property type="entry name" value="aa-tRNA-synth_II"/>
</dbReference>
<dbReference type="InterPro" id="IPR045864">
    <property type="entry name" value="aa-tRNA-synth_II/BPL/LPL"/>
</dbReference>
<dbReference type="InterPro" id="IPR004529">
    <property type="entry name" value="Phe-tRNA-synth_IIc_asu"/>
</dbReference>
<dbReference type="InterPro" id="IPR004188">
    <property type="entry name" value="Phe-tRNA_ligase_II_N"/>
</dbReference>
<dbReference type="InterPro" id="IPR022911">
    <property type="entry name" value="Phe_tRNA_ligase_alpha1_bac"/>
</dbReference>
<dbReference type="InterPro" id="IPR002319">
    <property type="entry name" value="Phenylalanyl-tRNA_Synthase"/>
</dbReference>
<dbReference type="InterPro" id="IPR010978">
    <property type="entry name" value="tRNA-bd_arm"/>
</dbReference>
<dbReference type="NCBIfam" id="TIGR00468">
    <property type="entry name" value="pheS"/>
    <property type="match status" value="1"/>
</dbReference>
<dbReference type="PANTHER" id="PTHR11538:SF41">
    <property type="entry name" value="PHENYLALANINE--TRNA LIGASE, MITOCHONDRIAL"/>
    <property type="match status" value="1"/>
</dbReference>
<dbReference type="PANTHER" id="PTHR11538">
    <property type="entry name" value="PHENYLALANYL-TRNA SYNTHETASE"/>
    <property type="match status" value="1"/>
</dbReference>
<dbReference type="Pfam" id="PF02912">
    <property type="entry name" value="Phe_tRNA-synt_N"/>
    <property type="match status" value="1"/>
</dbReference>
<dbReference type="Pfam" id="PF01409">
    <property type="entry name" value="tRNA-synt_2d"/>
    <property type="match status" value="1"/>
</dbReference>
<dbReference type="SUPFAM" id="SSF55681">
    <property type="entry name" value="Class II aaRS and biotin synthetases"/>
    <property type="match status" value="1"/>
</dbReference>
<dbReference type="SUPFAM" id="SSF46589">
    <property type="entry name" value="tRNA-binding arm"/>
    <property type="match status" value="1"/>
</dbReference>
<dbReference type="PROSITE" id="PS50862">
    <property type="entry name" value="AA_TRNA_LIGASE_II"/>
    <property type="match status" value="1"/>
</dbReference>
<sequence>MNHSIAMGNLEDLVNAAIKLFDNAESIVDLEQIKAQYLGKTGEITILLKGLRELTPEERPVMGERINQAKKLLEDALIERRNLIQEKNMSARLAEESLDVSLPGRGLGMGGVHPVTRTLIRIESLFHSIGFGVATGPEIETDFYNFTALNIAENHPARAMHDTFYVDGGKLLRTHTSPVQIHYMQNHRPPIKIIAPGRVYRCDSDVTHTPMFHQVEGLWIDENVSFSALKGVLVEFMRNFFEKDNLSVRFRPSFFPFTEPSAEMDIACVMCNGKGCRVCGETGWLEVLGCGMVHPNVMNHVGLDSEEHIGFAFGLGVERLAMLRYGVNDLRLFFENDLRFLKQFN</sequence>
<name>SYFA_NITEU</name>
<feature type="chain" id="PRO_0000126736" description="Phenylalanine--tRNA ligase alpha subunit">
    <location>
        <begin position="1"/>
        <end position="345"/>
    </location>
</feature>
<feature type="binding site" evidence="1">
    <location>
        <position position="259"/>
    </location>
    <ligand>
        <name>Mg(2+)</name>
        <dbReference type="ChEBI" id="CHEBI:18420"/>
        <note>shared with beta subunit</note>
    </ligand>
</feature>
<comment type="catalytic activity">
    <reaction evidence="1">
        <text>tRNA(Phe) + L-phenylalanine + ATP = L-phenylalanyl-tRNA(Phe) + AMP + diphosphate + H(+)</text>
        <dbReference type="Rhea" id="RHEA:19413"/>
        <dbReference type="Rhea" id="RHEA-COMP:9668"/>
        <dbReference type="Rhea" id="RHEA-COMP:9699"/>
        <dbReference type="ChEBI" id="CHEBI:15378"/>
        <dbReference type="ChEBI" id="CHEBI:30616"/>
        <dbReference type="ChEBI" id="CHEBI:33019"/>
        <dbReference type="ChEBI" id="CHEBI:58095"/>
        <dbReference type="ChEBI" id="CHEBI:78442"/>
        <dbReference type="ChEBI" id="CHEBI:78531"/>
        <dbReference type="ChEBI" id="CHEBI:456215"/>
        <dbReference type="EC" id="6.1.1.20"/>
    </reaction>
</comment>
<comment type="cofactor">
    <cofactor evidence="1">
        <name>Mg(2+)</name>
        <dbReference type="ChEBI" id="CHEBI:18420"/>
    </cofactor>
    <text evidence="1">Binds 2 magnesium ions per tetramer.</text>
</comment>
<comment type="subunit">
    <text evidence="1">Tetramer of two alpha and two beta subunits.</text>
</comment>
<comment type="subcellular location">
    <subcellularLocation>
        <location evidence="1">Cytoplasm</location>
    </subcellularLocation>
</comment>
<comment type="similarity">
    <text evidence="1">Belongs to the class-II aminoacyl-tRNA synthetase family. Phe-tRNA synthetase alpha subunit type 1 subfamily.</text>
</comment>
<accession>Q82VV5</accession>
<reference key="1">
    <citation type="journal article" date="2003" name="J. Bacteriol.">
        <title>Complete genome sequence of the ammonia-oxidizing bacterium and obligate chemolithoautotroph Nitrosomonas europaea.</title>
        <authorList>
            <person name="Chain P."/>
            <person name="Lamerdin J.E."/>
            <person name="Larimer F.W."/>
            <person name="Regala W."/>
            <person name="Lao V."/>
            <person name="Land M.L."/>
            <person name="Hauser L."/>
            <person name="Hooper A.B."/>
            <person name="Klotz M.G."/>
            <person name="Norton J."/>
            <person name="Sayavedra-Soto L.A."/>
            <person name="Arciero D.M."/>
            <person name="Hommes N.G."/>
            <person name="Whittaker M.M."/>
            <person name="Arp D.J."/>
        </authorList>
    </citation>
    <scope>NUCLEOTIDE SEQUENCE [LARGE SCALE GENOMIC DNA]</scope>
    <source>
        <strain>ATCC 19718 / CIP 103999 / KCTC 2705 / NBRC 14298</strain>
    </source>
</reference>
<evidence type="ECO:0000255" key="1">
    <source>
        <dbReference type="HAMAP-Rule" id="MF_00281"/>
    </source>
</evidence>
<keyword id="KW-0030">Aminoacyl-tRNA synthetase</keyword>
<keyword id="KW-0067">ATP-binding</keyword>
<keyword id="KW-0963">Cytoplasm</keyword>
<keyword id="KW-0436">Ligase</keyword>
<keyword id="KW-0460">Magnesium</keyword>
<keyword id="KW-0479">Metal-binding</keyword>
<keyword id="KW-0547">Nucleotide-binding</keyword>
<keyword id="KW-0648">Protein biosynthesis</keyword>
<keyword id="KW-1185">Reference proteome</keyword>